<keyword id="KW-0067">ATP-binding</keyword>
<keyword id="KW-0143">Chaperone</keyword>
<keyword id="KW-0547">Nucleotide-binding</keyword>
<keyword id="KW-0597">Phosphoprotein</keyword>
<keyword id="KW-0346">Stress response</keyword>
<reference key="1">
    <citation type="submission" date="2007-04" db="EMBL/GenBank/DDBJ databases">
        <title>Genome sequence of the thermophilic hydrogen-producing bacterium Caldicellulosiruptor saccharolyticus DSM 8903.</title>
        <authorList>
            <person name="Copeland A."/>
            <person name="Lucas S."/>
            <person name="Lapidus A."/>
            <person name="Barry K."/>
            <person name="Detter J.C."/>
            <person name="Glavina del Rio T."/>
            <person name="Hammon N."/>
            <person name="Israni S."/>
            <person name="Dalin E."/>
            <person name="Tice H."/>
            <person name="Pitluck S."/>
            <person name="Kiss H."/>
            <person name="Brettin T."/>
            <person name="Bruce D."/>
            <person name="Han C."/>
            <person name="Schmutz J."/>
            <person name="Larimer F."/>
            <person name="Land M."/>
            <person name="Hauser L."/>
            <person name="Kyrpides N."/>
            <person name="Lykidis A."/>
            <person name="van de Werken H.J.G."/>
            <person name="Verhaart M.R.A."/>
            <person name="VanFossen A.L."/>
            <person name="Lewis D.L."/>
            <person name="Nichols J.D."/>
            <person name="Goorissen H.P."/>
            <person name="van Niel E.W.J."/>
            <person name="Stams F.J.M."/>
            <person name="Willquist K.U."/>
            <person name="Ward D.E."/>
            <person name="van der Oost J."/>
            <person name="Kelly R.M."/>
            <person name="Kengen S.M.W."/>
            <person name="Richardson P."/>
        </authorList>
    </citation>
    <scope>NUCLEOTIDE SEQUENCE [LARGE SCALE GENOMIC DNA]</scope>
    <source>
        <strain>ATCC 43494 / DSM 8903 / Tp8T 6331</strain>
    </source>
</reference>
<proteinExistence type="inferred from homology"/>
<evidence type="ECO:0000255" key="1">
    <source>
        <dbReference type="HAMAP-Rule" id="MF_00332"/>
    </source>
</evidence>
<evidence type="ECO:0000256" key="2">
    <source>
        <dbReference type="SAM" id="MobiDB-lite"/>
    </source>
</evidence>
<comment type="function">
    <text evidence="1">Acts as a chaperone.</text>
</comment>
<comment type="induction">
    <text evidence="1">By stress conditions e.g. heat shock.</text>
</comment>
<comment type="similarity">
    <text evidence="1">Belongs to the heat shock protein 70 family.</text>
</comment>
<organism>
    <name type="scientific">Caldicellulosiruptor saccharolyticus (strain ATCC 43494 / DSM 8903 / Tp8T 6331)</name>
    <dbReference type="NCBI Taxonomy" id="351627"/>
    <lineage>
        <taxon>Bacteria</taxon>
        <taxon>Bacillati</taxon>
        <taxon>Bacillota</taxon>
        <taxon>Bacillota incertae sedis</taxon>
        <taxon>Caldicellulosiruptorales</taxon>
        <taxon>Caldicellulosiruptoraceae</taxon>
        <taxon>Caldicellulosiruptor</taxon>
    </lineage>
</organism>
<feature type="chain" id="PRO_1000059528" description="Chaperone protein DnaK">
    <location>
        <begin position="1"/>
        <end position="606"/>
    </location>
</feature>
<feature type="region of interest" description="Disordered" evidence="2">
    <location>
        <begin position="578"/>
        <end position="606"/>
    </location>
</feature>
<feature type="compositionally biased region" description="Gly residues" evidence="2">
    <location>
        <begin position="583"/>
        <end position="596"/>
    </location>
</feature>
<feature type="modified residue" description="Phosphothreonine; by autocatalysis" evidence="1">
    <location>
        <position position="174"/>
    </location>
</feature>
<protein>
    <recommendedName>
        <fullName evidence="1">Chaperone protein DnaK</fullName>
    </recommendedName>
    <alternativeName>
        <fullName evidence="1">HSP70</fullName>
    </alternativeName>
    <alternativeName>
        <fullName evidence="1">Heat shock 70 kDa protein</fullName>
    </alternativeName>
    <alternativeName>
        <fullName evidence="1">Heat shock protein 70</fullName>
    </alternativeName>
</protein>
<gene>
    <name evidence="1" type="primary">dnaK</name>
    <name type="ordered locus">Csac_1752</name>
</gene>
<sequence>MAHILGIDLGTTNSCMAVIEGGQPVVIPNAEGFRTTPSVVAFTKTGERLVGHAAKRQAITNPERTIISIKRDMGTNRRIKIDDKEYSPEEISAMILMKLKADAEAYLGEKITQAVITVPAYFTDSQRQATKNAGRIAGLEVLRIINEPTAAALAYGLDKEGHQKIMVYDLGGGTFDVSILEIGEGVIEVLATSGNNRLGGDDFDQRIIDYIADEFMKEHGIDLRKDKVALQRLKDAAERAKIELSSALQTTINLPFITADANGPKHIDMVLTRAKFEELIKDLVEKTREPVETALSDAKLTPEQIDKVILVGGSTRIPYVQEFVKKLTGKEPFKGINPDECVAIGAAIQAGVLGGQVKDILLLDVTPLSLGIETLGGVFTKIIERNTTIPTRKSQIFTTAADGQTQVEIHVLQGERPLAKDNKTLGRFILDGIPPAPRGVPQIEVTFDIDANGIVHVSAKDLGTGREQKITITSQTHLSEEEIQRAIKEAEMYAEQDRKRKELIETRNKADSIIYQTEKLLRDLGDKMTATEKEQIEAKLKALKDVMNGEDKERIERAIDELTKSFYDVSTRLYQQGYTQAGPQGGTNPGGQGGTDGNVNTDYKVY</sequence>
<accession>A4XKA4</accession>
<name>DNAK_CALS8</name>
<dbReference type="EMBL" id="CP000679">
    <property type="protein sequence ID" value="ABP67339.1"/>
    <property type="molecule type" value="Genomic_DNA"/>
</dbReference>
<dbReference type="RefSeq" id="WP_011917273.1">
    <property type="nucleotide sequence ID" value="NC_009437.1"/>
</dbReference>
<dbReference type="SMR" id="A4XKA4"/>
<dbReference type="STRING" id="351627.Csac_1752"/>
<dbReference type="KEGG" id="csc:Csac_1752"/>
<dbReference type="eggNOG" id="COG0443">
    <property type="taxonomic scope" value="Bacteria"/>
</dbReference>
<dbReference type="HOGENOM" id="CLU_005965_2_4_9"/>
<dbReference type="OrthoDB" id="9766019at2"/>
<dbReference type="Proteomes" id="UP000000256">
    <property type="component" value="Chromosome"/>
</dbReference>
<dbReference type="GO" id="GO:0005524">
    <property type="term" value="F:ATP binding"/>
    <property type="evidence" value="ECO:0007669"/>
    <property type="project" value="UniProtKB-UniRule"/>
</dbReference>
<dbReference type="GO" id="GO:0140662">
    <property type="term" value="F:ATP-dependent protein folding chaperone"/>
    <property type="evidence" value="ECO:0007669"/>
    <property type="project" value="InterPro"/>
</dbReference>
<dbReference type="GO" id="GO:0051082">
    <property type="term" value="F:unfolded protein binding"/>
    <property type="evidence" value="ECO:0007669"/>
    <property type="project" value="InterPro"/>
</dbReference>
<dbReference type="CDD" id="cd10234">
    <property type="entry name" value="ASKHA_NBD_HSP70_DnaK-like"/>
    <property type="match status" value="1"/>
</dbReference>
<dbReference type="FunFam" id="2.60.34.10:FF:000014">
    <property type="entry name" value="Chaperone protein DnaK HSP70"/>
    <property type="match status" value="1"/>
</dbReference>
<dbReference type="FunFam" id="1.20.1270.10:FF:000001">
    <property type="entry name" value="Molecular chaperone DnaK"/>
    <property type="match status" value="1"/>
</dbReference>
<dbReference type="FunFam" id="3.30.420.40:FF:000071">
    <property type="entry name" value="Molecular chaperone DnaK"/>
    <property type="match status" value="1"/>
</dbReference>
<dbReference type="FunFam" id="3.90.640.10:FF:000003">
    <property type="entry name" value="Molecular chaperone DnaK"/>
    <property type="match status" value="1"/>
</dbReference>
<dbReference type="Gene3D" id="1.20.1270.10">
    <property type="match status" value="1"/>
</dbReference>
<dbReference type="Gene3D" id="3.30.420.40">
    <property type="match status" value="2"/>
</dbReference>
<dbReference type="Gene3D" id="3.90.640.10">
    <property type="entry name" value="Actin, Chain A, domain 4"/>
    <property type="match status" value="1"/>
</dbReference>
<dbReference type="Gene3D" id="2.60.34.10">
    <property type="entry name" value="Substrate Binding Domain Of DNAk, Chain A, domain 1"/>
    <property type="match status" value="1"/>
</dbReference>
<dbReference type="HAMAP" id="MF_00332">
    <property type="entry name" value="DnaK"/>
    <property type="match status" value="1"/>
</dbReference>
<dbReference type="InterPro" id="IPR043129">
    <property type="entry name" value="ATPase_NBD"/>
</dbReference>
<dbReference type="InterPro" id="IPR012725">
    <property type="entry name" value="Chaperone_DnaK"/>
</dbReference>
<dbReference type="InterPro" id="IPR018181">
    <property type="entry name" value="Heat_shock_70_CS"/>
</dbReference>
<dbReference type="InterPro" id="IPR029048">
    <property type="entry name" value="HSP70_C_sf"/>
</dbReference>
<dbReference type="InterPro" id="IPR029047">
    <property type="entry name" value="HSP70_peptide-bd_sf"/>
</dbReference>
<dbReference type="InterPro" id="IPR013126">
    <property type="entry name" value="Hsp_70_fam"/>
</dbReference>
<dbReference type="NCBIfam" id="NF001413">
    <property type="entry name" value="PRK00290.1"/>
    <property type="match status" value="1"/>
</dbReference>
<dbReference type="NCBIfam" id="TIGR02350">
    <property type="entry name" value="prok_dnaK"/>
    <property type="match status" value="1"/>
</dbReference>
<dbReference type="PANTHER" id="PTHR19375">
    <property type="entry name" value="HEAT SHOCK PROTEIN 70KDA"/>
    <property type="match status" value="1"/>
</dbReference>
<dbReference type="Pfam" id="PF00012">
    <property type="entry name" value="HSP70"/>
    <property type="match status" value="2"/>
</dbReference>
<dbReference type="PRINTS" id="PR00301">
    <property type="entry name" value="HEATSHOCK70"/>
</dbReference>
<dbReference type="SUPFAM" id="SSF53067">
    <property type="entry name" value="Actin-like ATPase domain"/>
    <property type="match status" value="2"/>
</dbReference>
<dbReference type="SUPFAM" id="SSF100934">
    <property type="entry name" value="Heat shock protein 70kD (HSP70), C-terminal subdomain"/>
    <property type="match status" value="1"/>
</dbReference>
<dbReference type="SUPFAM" id="SSF100920">
    <property type="entry name" value="Heat shock protein 70kD (HSP70), peptide-binding domain"/>
    <property type="match status" value="1"/>
</dbReference>
<dbReference type="PROSITE" id="PS00297">
    <property type="entry name" value="HSP70_1"/>
    <property type="match status" value="1"/>
</dbReference>
<dbReference type="PROSITE" id="PS00329">
    <property type="entry name" value="HSP70_2"/>
    <property type="match status" value="1"/>
</dbReference>
<dbReference type="PROSITE" id="PS01036">
    <property type="entry name" value="HSP70_3"/>
    <property type="match status" value="1"/>
</dbReference>